<dbReference type="EMBL" id="CR543861">
    <property type="protein sequence ID" value="CAG68131.1"/>
    <property type="molecule type" value="Genomic_DNA"/>
</dbReference>
<dbReference type="RefSeq" id="WP_004925977.1">
    <property type="nucleotide sequence ID" value="NC_005966.1"/>
</dbReference>
<dbReference type="SMR" id="Q6FCS8"/>
<dbReference type="STRING" id="202950.GCA_001485005_01020"/>
<dbReference type="DNASU" id="2878932"/>
<dbReference type="GeneID" id="45233679"/>
<dbReference type="KEGG" id="aci:ACIAD1257"/>
<dbReference type="eggNOG" id="COG3705">
    <property type="taxonomic scope" value="Bacteria"/>
</dbReference>
<dbReference type="HOGENOM" id="CLU_025113_0_1_6"/>
<dbReference type="OrthoDB" id="9769617at2"/>
<dbReference type="BioCyc" id="ASP62977:ACIAD_RS05780-MONOMER"/>
<dbReference type="UniPathway" id="UPA00031">
    <property type="reaction ID" value="UER00006"/>
</dbReference>
<dbReference type="Proteomes" id="UP000000430">
    <property type="component" value="Chromosome"/>
</dbReference>
<dbReference type="GO" id="GO:0005737">
    <property type="term" value="C:cytoplasm"/>
    <property type="evidence" value="ECO:0007669"/>
    <property type="project" value="UniProtKB-SubCell"/>
</dbReference>
<dbReference type="GO" id="GO:0004821">
    <property type="term" value="F:histidine-tRNA ligase activity"/>
    <property type="evidence" value="ECO:0007669"/>
    <property type="project" value="TreeGrafter"/>
</dbReference>
<dbReference type="GO" id="GO:0006427">
    <property type="term" value="P:histidyl-tRNA aminoacylation"/>
    <property type="evidence" value="ECO:0007669"/>
    <property type="project" value="TreeGrafter"/>
</dbReference>
<dbReference type="GO" id="GO:0000105">
    <property type="term" value="P:L-histidine biosynthetic process"/>
    <property type="evidence" value="ECO:0007669"/>
    <property type="project" value="UniProtKB-UniRule"/>
</dbReference>
<dbReference type="Gene3D" id="3.30.930.10">
    <property type="entry name" value="Bira Bifunctional Protein, Domain 2"/>
    <property type="match status" value="1"/>
</dbReference>
<dbReference type="HAMAP" id="MF_00125">
    <property type="entry name" value="HisZ"/>
    <property type="match status" value="1"/>
</dbReference>
<dbReference type="InterPro" id="IPR045864">
    <property type="entry name" value="aa-tRNA-synth_II/BPL/LPL"/>
</dbReference>
<dbReference type="InterPro" id="IPR041715">
    <property type="entry name" value="HisRS-like_core"/>
</dbReference>
<dbReference type="InterPro" id="IPR004516">
    <property type="entry name" value="HisRS/HisZ"/>
</dbReference>
<dbReference type="InterPro" id="IPR004517">
    <property type="entry name" value="HisZ"/>
</dbReference>
<dbReference type="NCBIfam" id="TIGR00443">
    <property type="entry name" value="hisZ_biosyn_reg"/>
    <property type="match status" value="1"/>
</dbReference>
<dbReference type="NCBIfam" id="NF008935">
    <property type="entry name" value="PRK12292.1-1"/>
    <property type="match status" value="1"/>
</dbReference>
<dbReference type="NCBIfam" id="NF009086">
    <property type="entry name" value="PRK12421.1"/>
    <property type="match status" value="1"/>
</dbReference>
<dbReference type="PANTHER" id="PTHR43707:SF1">
    <property type="entry name" value="HISTIDINE--TRNA LIGASE, MITOCHONDRIAL-RELATED"/>
    <property type="match status" value="1"/>
</dbReference>
<dbReference type="PANTHER" id="PTHR43707">
    <property type="entry name" value="HISTIDYL-TRNA SYNTHETASE"/>
    <property type="match status" value="1"/>
</dbReference>
<dbReference type="Pfam" id="PF13393">
    <property type="entry name" value="tRNA-synt_His"/>
    <property type="match status" value="1"/>
</dbReference>
<dbReference type="PIRSF" id="PIRSF001549">
    <property type="entry name" value="His-tRNA_synth"/>
    <property type="match status" value="1"/>
</dbReference>
<dbReference type="SUPFAM" id="SSF55681">
    <property type="entry name" value="Class II aaRS and biotin synthetases"/>
    <property type="match status" value="1"/>
</dbReference>
<name>HISZ_ACIAD</name>
<sequence length="388" mass="43161">MPISETWLLPDGVADVLPEQAQVVETLRRQALDFLASRGYQLVYTPFIEYIESLSLLSESNHDLDLVTFKVIDQLSGRLLGVRADMTPQVARIDAHVRSIEGVARYCYAGTVLHTKPQNFNSSRAPLQLGAELYGHQSLEADIEMVDVMLGLIQQAHNLEGLHLDLGHVGLFRSLVKRAGLSKQVEQDLSDLYQRKALPELEEVTKTLAFGSDFYALGRYASDLNALEQHLSQDVLNDASFKTSLDDLKTTLSQIQTRWPNLRIGIDVVELRSYHYHTGLMYAVYAPNRAAPLAQGGRYDGIGEHFGRARPATGFSCDLYALCVGQFKEIETIVAPAGQDQQLLGAIAQARQNGLRVIQLLGNDDLSSVPYATHKMELAQDQWQINKI</sequence>
<protein>
    <recommendedName>
        <fullName evidence="1">ATP phosphoribosyltransferase regulatory subunit</fullName>
    </recommendedName>
</protein>
<organism>
    <name type="scientific">Acinetobacter baylyi (strain ATCC 33305 / BD413 / ADP1)</name>
    <dbReference type="NCBI Taxonomy" id="62977"/>
    <lineage>
        <taxon>Bacteria</taxon>
        <taxon>Pseudomonadati</taxon>
        <taxon>Pseudomonadota</taxon>
        <taxon>Gammaproteobacteria</taxon>
        <taxon>Moraxellales</taxon>
        <taxon>Moraxellaceae</taxon>
        <taxon>Acinetobacter</taxon>
    </lineage>
</organism>
<evidence type="ECO:0000255" key="1">
    <source>
        <dbReference type="HAMAP-Rule" id="MF_00125"/>
    </source>
</evidence>
<feature type="chain" id="PRO_0000242815" description="ATP phosphoribosyltransferase regulatory subunit">
    <location>
        <begin position="1"/>
        <end position="388"/>
    </location>
</feature>
<comment type="function">
    <text evidence="1">Required for the first step of histidine biosynthesis. May allow the feedback regulation of ATP phosphoribosyltransferase activity by histidine.</text>
</comment>
<comment type="pathway">
    <text evidence="1">Amino-acid biosynthesis; L-histidine biosynthesis; L-histidine from 5-phospho-alpha-D-ribose 1-diphosphate: step 1/9.</text>
</comment>
<comment type="subunit">
    <text evidence="1">Heteromultimer composed of HisG and HisZ subunits.</text>
</comment>
<comment type="subcellular location">
    <subcellularLocation>
        <location evidence="1">Cytoplasm</location>
    </subcellularLocation>
</comment>
<comment type="miscellaneous">
    <text>This function is generally fulfilled by the C-terminal part of HisG, which is missing in some bacteria such as this one.</text>
</comment>
<comment type="similarity">
    <text evidence="1">Belongs to the class-II aminoacyl-tRNA synthetase family. HisZ subfamily.</text>
</comment>
<proteinExistence type="inferred from homology"/>
<reference key="1">
    <citation type="journal article" date="2004" name="Nucleic Acids Res.">
        <title>Unique features revealed by the genome sequence of Acinetobacter sp. ADP1, a versatile and naturally transformation competent bacterium.</title>
        <authorList>
            <person name="Barbe V."/>
            <person name="Vallenet D."/>
            <person name="Fonknechten N."/>
            <person name="Kreimeyer A."/>
            <person name="Oztas S."/>
            <person name="Labarre L."/>
            <person name="Cruveiller S."/>
            <person name="Robert C."/>
            <person name="Duprat S."/>
            <person name="Wincker P."/>
            <person name="Ornston L.N."/>
            <person name="Weissenbach J."/>
            <person name="Marliere P."/>
            <person name="Cohen G.N."/>
            <person name="Medigue C."/>
        </authorList>
    </citation>
    <scope>NUCLEOTIDE SEQUENCE [LARGE SCALE GENOMIC DNA]</scope>
    <source>
        <strain>ATCC 33305 / BD413 / ADP1</strain>
    </source>
</reference>
<accession>Q6FCS8</accession>
<gene>
    <name evidence="1" type="primary">hisZ</name>
    <name type="ordered locus">ACIAD1257</name>
</gene>
<keyword id="KW-0028">Amino-acid biosynthesis</keyword>
<keyword id="KW-0963">Cytoplasm</keyword>
<keyword id="KW-0368">Histidine biosynthesis</keyword>